<reference key="1">
    <citation type="submission" date="2006-09" db="EMBL/GenBank/DDBJ databases">
        <title>Complete sequence of chromosome 1 of Shewanella sp. ANA-3.</title>
        <authorList>
            <person name="Copeland A."/>
            <person name="Lucas S."/>
            <person name="Lapidus A."/>
            <person name="Barry K."/>
            <person name="Detter J.C."/>
            <person name="Glavina del Rio T."/>
            <person name="Hammon N."/>
            <person name="Israni S."/>
            <person name="Dalin E."/>
            <person name="Tice H."/>
            <person name="Pitluck S."/>
            <person name="Chertkov O."/>
            <person name="Brettin T."/>
            <person name="Bruce D."/>
            <person name="Han C."/>
            <person name="Tapia R."/>
            <person name="Gilna P."/>
            <person name="Schmutz J."/>
            <person name="Larimer F."/>
            <person name="Land M."/>
            <person name="Hauser L."/>
            <person name="Kyrpides N."/>
            <person name="Kim E."/>
            <person name="Newman D."/>
            <person name="Salticov C."/>
            <person name="Konstantinidis K."/>
            <person name="Klappenback J."/>
            <person name="Tiedje J."/>
            <person name="Richardson P."/>
        </authorList>
    </citation>
    <scope>NUCLEOTIDE SEQUENCE [LARGE SCALE GENOMIC DNA]</scope>
    <source>
        <strain>ANA-3</strain>
    </source>
</reference>
<comment type="function">
    <text evidence="1">Participates in the translocation of lipoproteins from the inner membrane to the outer membrane. Only forms a complex with a lipoprotein if the residue after the N-terminal Cys is not an aspartate (The Asp acts as a targeting signal to indicate that the lipoprotein should stay in the inner membrane).</text>
</comment>
<comment type="subunit">
    <text evidence="1">Monomer.</text>
</comment>
<comment type="subcellular location">
    <subcellularLocation>
        <location evidence="1">Periplasm</location>
    </subcellularLocation>
</comment>
<comment type="similarity">
    <text evidence="1">Belongs to the LolA family.</text>
</comment>
<protein>
    <recommendedName>
        <fullName evidence="1">Outer-membrane lipoprotein carrier protein</fullName>
    </recommendedName>
</protein>
<keyword id="KW-0143">Chaperone</keyword>
<keyword id="KW-0574">Periplasm</keyword>
<keyword id="KW-0653">Protein transport</keyword>
<keyword id="KW-0732">Signal</keyword>
<keyword id="KW-0813">Transport</keyword>
<gene>
    <name evidence="1" type="primary">lolA</name>
    <name type="ordered locus">Shewana3_2051</name>
</gene>
<name>LOLA_SHESA</name>
<feature type="signal peptide" evidence="1">
    <location>
        <begin position="1"/>
        <end position="21"/>
    </location>
</feature>
<feature type="chain" id="PRO_1000005705" description="Outer-membrane lipoprotein carrier protein">
    <location>
        <begin position="22"/>
        <end position="206"/>
    </location>
</feature>
<dbReference type="EMBL" id="CP000469">
    <property type="protein sequence ID" value="ABK48281.1"/>
    <property type="molecule type" value="Genomic_DNA"/>
</dbReference>
<dbReference type="RefSeq" id="WP_011717033.1">
    <property type="nucleotide sequence ID" value="NC_008577.1"/>
</dbReference>
<dbReference type="SMR" id="A0KWW2"/>
<dbReference type="STRING" id="94122.Shewana3_2051"/>
<dbReference type="KEGG" id="shn:Shewana3_2051"/>
<dbReference type="eggNOG" id="COG2834">
    <property type="taxonomic scope" value="Bacteria"/>
</dbReference>
<dbReference type="HOGENOM" id="CLU_087560_1_1_6"/>
<dbReference type="OrthoDB" id="9787361at2"/>
<dbReference type="Proteomes" id="UP000002589">
    <property type="component" value="Chromosome"/>
</dbReference>
<dbReference type="GO" id="GO:0030288">
    <property type="term" value="C:outer membrane-bounded periplasmic space"/>
    <property type="evidence" value="ECO:0007669"/>
    <property type="project" value="TreeGrafter"/>
</dbReference>
<dbReference type="GO" id="GO:0044874">
    <property type="term" value="P:lipoprotein localization to outer membrane"/>
    <property type="evidence" value="ECO:0007669"/>
    <property type="project" value="UniProtKB-UniRule"/>
</dbReference>
<dbReference type="GO" id="GO:0042953">
    <property type="term" value="P:lipoprotein transport"/>
    <property type="evidence" value="ECO:0007669"/>
    <property type="project" value="InterPro"/>
</dbReference>
<dbReference type="CDD" id="cd16325">
    <property type="entry name" value="LolA"/>
    <property type="match status" value="1"/>
</dbReference>
<dbReference type="FunFam" id="2.50.20.10:FF:000016">
    <property type="entry name" value="Outer-membrane lipoprotein carrier protein"/>
    <property type="match status" value="1"/>
</dbReference>
<dbReference type="Gene3D" id="2.50.20.10">
    <property type="entry name" value="Lipoprotein localisation LolA/LolB/LppX"/>
    <property type="match status" value="1"/>
</dbReference>
<dbReference type="HAMAP" id="MF_00240">
    <property type="entry name" value="LolA"/>
    <property type="match status" value="1"/>
</dbReference>
<dbReference type="InterPro" id="IPR029046">
    <property type="entry name" value="LolA/LolB/LppX"/>
</dbReference>
<dbReference type="InterPro" id="IPR004564">
    <property type="entry name" value="OM_lipoprot_carrier_LolA-like"/>
</dbReference>
<dbReference type="InterPro" id="IPR018323">
    <property type="entry name" value="OM_lipoprot_carrier_LolA_Pbac"/>
</dbReference>
<dbReference type="NCBIfam" id="TIGR00547">
    <property type="entry name" value="lolA"/>
    <property type="match status" value="1"/>
</dbReference>
<dbReference type="PANTHER" id="PTHR35869">
    <property type="entry name" value="OUTER-MEMBRANE LIPOPROTEIN CARRIER PROTEIN"/>
    <property type="match status" value="1"/>
</dbReference>
<dbReference type="PANTHER" id="PTHR35869:SF1">
    <property type="entry name" value="OUTER-MEMBRANE LIPOPROTEIN CARRIER PROTEIN"/>
    <property type="match status" value="1"/>
</dbReference>
<dbReference type="Pfam" id="PF03548">
    <property type="entry name" value="LolA"/>
    <property type="match status" value="1"/>
</dbReference>
<dbReference type="SUPFAM" id="SSF89392">
    <property type="entry name" value="Prokaryotic lipoproteins and lipoprotein localization factors"/>
    <property type="match status" value="1"/>
</dbReference>
<proteinExistence type="inferred from homology"/>
<organism>
    <name type="scientific">Shewanella sp. (strain ANA-3)</name>
    <dbReference type="NCBI Taxonomy" id="94122"/>
    <lineage>
        <taxon>Bacteria</taxon>
        <taxon>Pseudomonadati</taxon>
        <taxon>Pseudomonadota</taxon>
        <taxon>Gammaproteobacteria</taxon>
        <taxon>Alteromonadales</taxon>
        <taxon>Shewanellaceae</taxon>
        <taxon>Shewanella</taxon>
    </lineage>
</organism>
<sequence length="206" mass="22867">MKKLLCAVLLSPLLYSNAVLADDAKQLRETLNGTESLKADFKQTVTDINKKVIQTGAGVFALAHPNQFYWHLTAPDESQIVADGKDLWIYNPFAEEVVIMDFAEAINASPIALLVHRDDATWSQYSVAKKQDCYEIKPKATDAGISSVNVCFNKGTLNKFNVLDDKGNQSQFDLSNQHSISAADKALFKFVLPENVDVDDQRLKSQ</sequence>
<evidence type="ECO:0000255" key="1">
    <source>
        <dbReference type="HAMAP-Rule" id="MF_00240"/>
    </source>
</evidence>
<accession>A0KWW2</accession>